<proteinExistence type="inferred from homology"/>
<dbReference type="EMBL" id="AF150108">
    <property type="protein sequence ID" value="AAD40014.1"/>
    <property type="molecule type" value="mRNA"/>
</dbReference>
<dbReference type="EMBL" id="FO080396">
    <property type="protein sequence ID" value="CCD83559.1"/>
    <property type="molecule type" value="Genomic_DNA"/>
</dbReference>
<dbReference type="EMBL" id="FO080396">
    <property type="protein sequence ID" value="CCD83560.1"/>
    <property type="molecule type" value="Genomic_DNA"/>
</dbReference>
<dbReference type="PIR" id="T30100">
    <property type="entry name" value="T30100"/>
</dbReference>
<dbReference type="RefSeq" id="NP_001021307.1">
    <molecule id="Q17754-2"/>
    <property type="nucleotide sequence ID" value="NM_001026136.7"/>
</dbReference>
<dbReference type="RefSeq" id="NP_501094.1">
    <property type="nucleotide sequence ID" value="NM_068693.1"/>
</dbReference>
<dbReference type="SMR" id="Q17754"/>
<dbReference type="BioGRID" id="42594">
    <property type="interactions" value="3"/>
</dbReference>
<dbReference type="FunCoup" id="Q17754">
    <property type="interactions" value="2430"/>
</dbReference>
<dbReference type="STRING" id="6239.C06G3.11.1"/>
<dbReference type="PaxDb" id="6239-C06G3.11a"/>
<dbReference type="PeptideAtlas" id="Q17754"/>
<dbReference type="EnsemblMetazoa" id="C06G3.11.1">
    <molecule id="Q17754-2"/>
    <property type="protein sequence ID" value="C06G3.11.1"/>
    <property type="gene ID" value="WBGene00006572"/>
</dbReference>
<dbReference type="GeneID" id="177475"/>
<dbReference type="KEGG" id="cel:CELE_C06G3.11"/>
<dbReference type="UCSC" id="C06G3.11a">
    <molecule id="Q17754-1"/>
    <property type="organism name" value="c. elegans"/>
</dbReference>
<dbReference type="AGR" id="WB:WBGene00006572"/>
<dbReference type="CTD" id="177475"/>
<dbReference type="WormBase" id="C06G3.11">
    <molecule id="Q17754-2"/>
    <property type="protein sequence ID" value="CE33518"/>
    <property type="gene ID" value="WBGene00006572"/>
    <property type="gene designation" value="tin-9.1"/>
</dbReference>
<dbReference type="eggNOG" id="KOG3479">
    <property type="taxonomic scope" value="Eukaryota"/>
</dbReference>
<dbReference type="GeneTree" id="ENSGT00940000160102"/>
<dbReference type="InParanoid" id="Q17754"/>
<dbReference type="OMA" id="QDFLRMY"/>
<dbReference type="OrthoDB" id="1551503at2759"/>
<dbReference type="PhylomeDB" id="Q17754"/>
<dbReference type="PRO" id="PR:Q17754"/>
<dbReference type="Proteomes" id="UP000001940">
    <property type="component" value="Chromosome IV"/>
</dbReference>
<dbReference type="Bgee" id="WBGene00006572">
    <property type="expression patterns" value="Expressed in pharyngeal muscle cell (C elegans) and 4 other cell types or tissues"/>
</dbReference>
<dbReference type="GO" id="GO:0005743">
    <property type="term" value="C:mitochondrial inner membrane"/>
    <property type="evidence" value="ECO:0007669"/>
    <property type="project" value="UniProtKB-SubCell"/>
</dbReference>
<dbReference type="GO" id="GO:0046872">
    <property type="term" value="F:metal ion binding"/>
    <property type="evidence" value="ECO:0007669"/>
    <property type="project" value="UniProtKB-KW"/>
</dbReference>
<dbReference type="GO" id="GO:0045039">
    <property type="term" value="P:protein insertion into mitochondrial inner membrane"/>
    <property type="evidence" value="ECO:0000315"/>
    <property type="project" value="WormBase"/>
</dbReference>
<dbReference type="GO" id="GO:0040014">
    <property type="term" value="P:regulation of multicellular organism growth"/>
    <property type="evidence" value="ECO:0000315"/>
    <property type="project" value="WormBase"/>
</dbReference>
<dbReference type="Gene3D" id="1.10.287.810">
    <property type="entry name" value="Mitochondrial import inner membrane translocase subunit tim13 like domains"/>
    <property type="match status" value="1"/>
</dbReference>
<dbReference type="InterPro" id="IPR050673">
    <property type="entry name" value="Mito_inner_translocase_sub"/>
</dbReference>
<dbReference type="InterPro" id="IPR004217">
    <property type="entry name" value="Tim10-like"/>
</dbReference>
<dbReference type="InterPro" id="IPR035427">
    <property type="entry name" value="Tim10-like_dom_sf"/>
</dbReference>
<dbReference type="PANTHER" id="PTHR13172">
    <property type="entry name" value="MITOCHONDRIAL IMPORT INNER MEMBRANE TRANSLOCASE SUBUNIT TIM9B"/>
    <property type="match status" value="1"/>
</dbReference>
<dbReference type="Pfam" id="PF02953">
    <property type="entry name" value="zf-Tim10_DDP"/>
    <property type="match status" value="1"/>
</dbReference>
<dbReference type="SUPFAM" id="SSF144122">
    <property type="entry name" value="Tim10-like"/>
    <property type="match status" value="1"/>
</dbReference>
<sequence>MTSEQNIQTFRDFLTQYNLVAEQCFNSCVNEFGSRTVSGKEESCANNCLDKFLKMTQRVSQRFQEHQLLNAQANGAAIKVENGGKINKIQ</sequence>
<gene>
    <name type="primary">tin-9.1</name>
    <name type="synonym">tim9a</name>
    <name type="synonym">tin-9</name>
    <name type="ORF">C06G3.11</name>
</gene>
<name>TIM9_CAEEL</name>
<organism>
    <name type="scientific">Caenorhabditis elegans</name>
    <dbReference type="NCBI Taxonomy" id="6239"/>
    <lineage>
        <taxon>Eukaryota</taxon>
        <taxon>Metazoa</taxon>
        <taxon>Ecdysozoa</taxon>
        <taxon>Nematoda</taxon>
        <taxon>Chromadorea</taxon>
        <taxon>Rhabditida</taxon>
        <taxon>Rhabditina</taxon>
        <taxon>Rhabditomorpha</taxon>
        <taxon>Rhabditoidea</taxon>
        <taxon>Rhabditidae</taxon>
        <taxon>Peloderinae</taxon>
        <taxon>Caenorhabditis</taxon>
    </lineage>
</organism>
<accession>Q17754</accession>
<accession>Q86B35</accession>
<comment type="function">
    <text evidence="4">Mitochondrial intermembrane chaperone that participates in the import and insertion of multi-pass transmembrane proteins into the mitochondrial inner membrane. May also be required for the transfer of beta-barrel precursors from the TOM complex to the sorting and assembly machinery (SAM complex) of the outer membrane. Acts as a chaperone-like protein that protects the hydrophobic precursors from aggregation and guide them through the mitochondrial intermembrane space (Probable).</text>
</comment>
<comment type="subunit">
    <text evidence="1">Heterohexamer; composed of 3 copies of tim-9/tin-9.1 and 3 copies of tim-10/tin-10, named soluble 70 kDa complex. The complex associates with the tim-22 component of the TIM22 complex. Interacts with multi-pass transmembrane proteins in transit (By similarity).</text>
</comment>
<comment type="subcellular location">
    <subcellularLocation>
        <location evidence="1">Mitochondrion inner membrane</location>
        <topology evidence="1">Peripheral membrane protein</topology>
        <orientation evidence="1">Intermembrane side</orientation>
    </subcellularLocation>
</comment>
<comment type="alternative products">
    <event type="alternative splicing"/>
    <isoform>
        <id>Q17754-1</id>
        <name>a</name>
        <sequence type="displayed"/>
    </isoform>
    <isoform>
        <id>Q17754-2</id>
        <name>b</name>
        <sequence type="described" ref="VSP_015407"/>
    </isoform>
</comment>
<comment type="domain">
    <text evidence="1">The twin CX3C motif contains 4 conserved Cys residues that form 2 disulfide bonds in the mitochondrial intermembrane space. However, during the transit of tim-9/tin-9.1 from cytoplasm into mitochondrion, the Cys residues probably coordinate zinc, thereby preventing folding and allowing its transfer across mitochondrial outer membrane (By similarity).</text>
</comment>
<comment type="disruption phenotype">
    <text evidence="2">Worms display a small body size, reduced number of progeny produced and partial embryonic lethality due to defects in import of proteins into mitochondria.</text>
</comment>
<comment type="similarity">
    <text evidence="3">Belongs to the small Tim family.</text>
</comment>
<protein>
    <recommendedName>
        <fullName>Mitochondrial import inner membrane translocase subunit Tim9</fullName>
    </recommendedName>
</protein>
<keyword id="KW-0025">Alternative splicing</keyword>
<keyword id="KW-0143">Chaperone</keyword>
<keyword id="KW-1015">Disulfide bond</keyword>
<keyword id="KW-0472">Membrane</keyword>
<keyword id="KW-0479">Metal-binding</keyword>
<keyword id="KW-0496">Mitochondrion</keyword>
<keyword id="KW-0999">Mitochondrion inner membrane</keyword>
<keyword id="KW-0653">Protein transport</keyword>
<keyword id="KW-1185">Reference proteome</keyword>
<keyword id="KW-0811">Translocation</keyword>
<keyword id="KW-0813">Transport</keyword>
<keyword id="KW-0862">Zinc</keyword>
<evidence type="ECO:0000250" key="1"/>
<evidence type="ECO:0000269" key="2">
    <source>
    </source>
</evidence>
<evidence type="ECO:0000305" key="3"/>
<evidence type="ECO:0000305" key="4">
    <source>
    </source>
</evidence>
<feature type="chain" id="PRO_0000193601" description="Mitochondrial import inner membrane translocase subunit Tim9">
    <location>
        <begin position="1"/>
        <end position="90"/>
    </location>
</feature>
<feature type="short sequence motif" description="Twin CX3C motif">
    <location>
        <begin position="24"/>
        <end position="48"/>
    </location>
</feature>
<feature type="disulfide bond" evidence="1">
    <location>
        <begin position="24"/>
        <end position="48"/>
    </location>
</feature>
<feature type="disulfide bond" evidence="1">
    <location>
        <begin position="28"/>
        <end position="44"/>
    </location>
</feature>
<feature type="splice variant" id="VSP_015407" description="In isoform b." evidence="3">
    <original>IKVENGGKINKIQ</original>
    <variation>M</variation>
    <location>
        <begin position="78"/>
        <end position="90"/>
    </location>
</feature>
<reference key="1">
    <citation type="journal article" date="1999" name="FEBS Lett.">
        <title>The mitochondrial TIM22 preprotein translocase is highly conserved throughout the eukaryotic kingdom.</title>
        <authorList>
            <person name="Bauer M.F."/>
            <person name="Rothbauer U."/>
            <person name="Muehlenbein N."/>
            <person name="Smith R.J.H."/>
            <person name="Gerbitz K.-D."/>
            <person name="Neupert W."/>
            <person name="Brunner M."/>
            <person name="Hofmann S."/>
        </authorList>
    </citation>
    <scope>NUCLEOTIDE SEQUENCE [MRNA] (ISOFORM A)</scope>
</reference>
<reference key="2">
    <citation type="journal article" date="1998" name="Science">
        <title>Genome sequence of the nematode C. elegans: a platform for investigating biology.</title>
        <authorList>
            <consortium name="The C. elegans sequencing consortium"/>
        </authorList>
    </citation>
    <scope>NUCLEOTIDE SEQUENCE [LARGE SCALE GENOMIC DNA]</scope>
    <scope>ALTERNATIVE SPLICING</scope>
    <source>
        <strain>Bristol N2</strain>
    </source>
</reference>
<reference key="3">
    <citation type="journal article" date="2004" name="J. Biol. Chem.">
        <title>Defective mitochondrial protein translocation precludes normal Caenorhabditis elegans development.</title>
        <authorList>
            <person name="Curran S.P."/>
            <person name="Leverich E.P."/>
            <person name="Koehler C.M."/>
            <person name="Larsen P.L."/>
        </authorList>
    </citation>
    <scope>FUNCTION</scope>
    <scope>DISRUPTION PHENOTYPE</scope>
</reference>